<accession>Q8CQ50</accession>
<proteinExistence type="inferred from homology"/>
<reference key="1">
    <citation type="journal article" date="2003" name="Mol. Microbiol.">
        <title>Genome-based analysis of virulence genes in a non-biofilm-forming Staphylococcus epidermidis strain (ATCC 12228).</title>
        <authorList>
            <person name="Zhang Y.-Q."/>
            <person name="Ren S.-X."/>
            <person name="Li H.-L."/>
            <person name="Wang Y.-X."/>
            <person name="Fu G."/>
            <person name="Yang J."/>
            <person name="Qin Z.-Q."/>
            <person name="Miao Y.-G."/>
            <person name="Wang W.-Y."/>
            <person name="Chen R.-S."/>
            <person name="Shen Y."/>
            <person name="Chen Z."/>
            <person name="Yuan Z.-H."/>
            <person name="Zhao G.-P."/>
            <person name="Qu D."/>
            <person name="Danchin A."/>
            <person name="Wen Y.-M."/>
        </authorList>
    </citation>
    <scope>NUCLEOTIDE SEQUENCE [LARGE SCALE GENOMIC DNA]</scope>
    <source>
        <strain>ATCC 12228 / FDA PCI 1200</strain>
    </source>
</reference>
<protein>
    <recommendedName>
        <fullName>Putative antiporter subunit mnhA2</fullName>
    </recommendedName>
    <alternativeName>
        <fullName>Mrp complex subunit A2</fullName>
    </alternativeName>
    <alternativeName>
        <fullName>Putative NADH-ubiquinone oxidoreductase subunit mnhA2</fullName>
    </alternativeName>
</protein>
<sequence>MSLVYLMATNLLFMLIVLFTLSHRQLRKVAGYVALIAPIVTSTYFIMKIPDVIRNKFIAVRLPWMPSIDINLDLRLDGLSLMFGLIISLIGVGVFFYATQYLSHSTDNLPRFFIYLLLFMFSMIGIVIANNTILMYVFWELTSISSFLLISYWYNNGESQLGAIQSFMITVFGGLALLTGFIILYIITGTNTITDILNQRNAISRHPLFIPMILMLLLGAFTKSAQFPFHIWLPKAMAAPTPVSAYLHSATMVKAGIFLLFRFTPLLGLSNVYIYTVTFVGLITMLFGSLTALRQYDLKGILAYSTISQLGMIMTMVGLGGGYAQHTSDELSKFYILVLFAGLFHLMNHAVFKCALFMGVGIIDHESGTRDIRLLNGMRKVFPKMHIVMLLAALSMAGVPFLNGFLSKEMFLDSLTKANELDQYGFVLTFVIISIGVIASILTFTYALYMIKETFWGNYNIEKFKRKQIHEPWLFSLPAVILMLLIPVIFFVPNVFGNFVILPATRSVSGIGAEVDAFVPHISQWHGVNLPLILSIVVIIIGLILALVVNWKEVTHQIIKSASITDGYRKIYREFELYSARGIRALMNNKLNYYIMITLFIFVAIVVYGYLTVGFPHVHQLHISSFGPLEVILSVVTLIIGISLIFIRQRLTMVVLNGMIGFAVTLYFIAMKAPDLALTQLVVETITTILFIVSFSRLPNIPRVKANLKKETFKIIVSLVMALTVVSLIFVAQQADGMPSIAKFYEDAYELTGGKNIVNAILGDFRALDTMFEGLVLIIAGLGIYTLLNYKDRRGQDERE</sequence>
<feature type="chain" id="PRO_0000372298" description="Putative antiporter subunit mnhA2">
    <location>
        <begin position="1"/>
        <end position="800"/>
    </location>
</feature>
<feature type="transmembrane region" description="Helical" evidence="2">
    <location>
        <begin position="1"/>
        <end position="21"/>
    </location>
</feature>
<feature type="transmembrane region" description="Helical" evidence="2">
    <location>
        <begin position="29"/>
        <end position="49"/>
    </location>
</feature>
<feature type="transmembrane region" description="Helical" evidence="2">
    <location>
        <begin position="78"/>
        <end position="98"/>
    </location>
</feature>
<feature type="transmembrane region" description="Helical" evidence="2">
    <location>
        <begin position="109"/>
        <end position="129"/>
    </location>
</feature>
<feature type="transmembrane region" description="Helical" evidence="2">
    <location>
        <begin position="133"/>
        <end position="153"/>
    </location>
</feature>
<feature type="transmembrane region" description="Helical" evidence="2">
    <location>
        <begin position="167"/>
        <end position="187"/>
    </location>
</feature>
<feature type="transmembrane region" description="Helical" evidence="2">
    <location>
        <begin position="209"/>
        <end position="229"/>
    </location>
</feature>
<feature type="transmembrane region" description="Helical" evidence="2">
    <location>
        <begin position="241"/>
        <end position="261"/>
    </location>
</feature>
<feature type="transmembrane region" description="Helical" evidence="2">
    <location>
        <begin position="272"/>
        <end position="292"/>
    </location>
</feature>
<feature type="transmembrane region" description="Helical" evidence="2">
    <location>
        <begin position="300"/>
        <end position="320"/>
    </location>
</feature>
<feature type="transmembrane region" description="Helical" evidence="2">
    <location>
        <begin position="336"/>
        <end position="356"/>
    </location>
</feature>
<feature type="transmembrane region" description="Helical" evidence="2">
    <location>
        <begin position="387"/>
        <end position="407"/>
    </location>
</feature>
<feature type="transmembrane region" description="Helical" evidence="2">
    <location>
        <begin position="424"/>
        <end position="444"/>
    </location>
</feature>
<feature type="transmembrane region" description="Helical" evidence="2">
    <location>
        <begin position="472"/>
        <end position="492"/>
    </location>
</feature>
<feature type="transmembrane region" description="Helical" evidence="2">
    <location>
        <begin position="528"/>
        <end position="548"/>
    </location>
</feature>
<feature type="transmembrane region" description="Helical" evidence="2">
    <location>
        <begin position="595"/>
        <end position="615"/>
    </location>
</feature>
<feature type="transmembrane region" description="Helical" evidence="2">
    <location>
        <begin position="627"/>
        <end position="647"/>
    </location>
</feature>
<feature type="transmembrane region" description="Helical" evidence="2">
    <location>
        <begin position="651"/>
        <end position="671"/>
    </location>
</feature>
<feature type="transmembrane region" description="Helical" evidence="2">
    <location>
        <begin position="676"/>
        <end position="696"/>
    </location>
</feature>
<feature type="transmembrane region" description="Helical" evidence="2">
    <location>
        <begin position="712"/>
        <end position="732"/>
    </location>
</feature>
<feature type="transmembrane region" description="Helical" evidence="2">
    <location>
        <begin position="768"/>
        <end position="788"/>
    </location>
</feature>
<comment type="subunit">
    <text evidence="1">May form a heterooligomeric complex that consists of seven subunits: mnhA2, mnhB2, mnhC2, mnhD2, mnhE2, mnhF2 and mnhG2.</text>
</comment>
<comment type="subcellular location">
    <subcellularLocation>
        <location evidence="3">Cell membrane</location>
        <topology evidence="3">Multi-pass membrane protein</topology>
    </subcellularLocation>
</comment>
<comment type="similarity">
    <text evidence="3">Belongs to the CPA3 antiporters (TC 2.A.63) subunit A family.</text>
</comment>
<name>MNHA2_STAES</name>
<gene>
    <name type="primary">mnhA2</name>
    <name type="synonym">mrpA2</name>
    <name type="ordered locus">SE_0397</name>
</gene>
<dbReference type="EMBL" id="AE015929">
    <property type="protein sequence ID" value="AAO03994.1"/>
    <property type="molecule type" value="Genomic_DNA"/>
</dbReference>
<dbReference type="RefSeq" id="NP_763952.1">
    <property type="nucleotide sequence ID" value="NC_004461.1"/>
</dbReference>
<dbReference type="RefSeq" id="WP_002485112.1">
    <property type="nucleotide sequence ID" value="NC_004461.1"/>
</dbReference>
<dbReference type="SMR" id="Q8CQ50"/>
<dbReference type="KEGG" id="sep:SE_0397"/>
<dbReference type="PATRIC" id="fig|176280.10.peg.371"/>
<dbReference type="eggNOG" id="COG1009">
    <property type="taxonomic scope" value="Bacteria"/>
</dbReference>
<dbReference type="eggNOG" id="COG2111">
    <property type="taxonomic scope" value="Bacteria"/>
</dbReference>
<dbReference type="HOGENOM" id="CLU_007100_2_1_9"/>
<dbReference type="OrthoDB" id="9807568at2"/>
<dbReference type="Proteomes" id="UP000001411">
    <property type="component" value="Chromosome"/>
</dbReference>
<dbReference type="GO" id="GO:0005886">
    <property type="term" value="C:plasma membrane"/>
    <property type="evidence" value="ECO:0007669"/>
    <property type="project" value="UniProtKB-SubCell"/>
</dbReference>
<dbReference type="GO" id="GO:0015297">
    <property type="term" value="F:antiporter activity"/>
    <property type="evidence" value="ECO:0007669"/>
    <property type="project" value="UniProtKB-KW"/>
</dbReference>
<dbReference type="GO" id="GO:0006811">
    <property type="term" value="P:monoatomic ion transport"/>
    <property type="evidence" value="ECO:0007669"/>
    <property type="project" value="UniProtKB-KW"/>
</dbReference>
<dbReference type="InterPro" id="IPR050616">
    <property type="entry name" value="CPA3_Na-H_Antiporter_A"/>
</dbReference>
<dbReference type="InterPro" id="IPR025383">
    <property type="entry name" value="MrpA_C/MbhD"/>
</dbReference>
<dbReference type="InterPro" id="IPR046806">
    <property type="entry name" value="MrpA_C/MbhE"/>
</dbReference>
<dbReference type="InterPro" id="IPR001750">
    <property type="entry name" value="ND/Mrp_TM"/>
</dbReference>
<dbReference type="InterPro" id="IPR001516">
    <property type="entry name" value="Proton_antipo_N"/>
</dbReference>
<dbReference type="NCBIfam" id="NF009286">
    <property type="entry name" value="PRK12646.1"/>
    <property type="match status" value="1"/>
</dbReference>
<dbReference type="PANTHER" id="PTHR43373">
    <property type="entry name" value="NA(+)/H(+) ANTIPORTER SUBUNIT"/>
    <property type="match status" value="1"/>
</dbReference>
<dbReference type="PANTHER" id="PTHR43373:SF1">
    <property type="entry name" value="NA(+)_H(+) ANTIPORTER SUBUNIT A"/>
    <property type="match status" value="1"/>
</dbReference>
<dbReference type="Pfam" id="PF13244">
    <property type="entry name" value="MbhD"/>
    <property type="match status" value="1"/>
</dbReference>
<dbReference type="Pfam" id="PF20501">
    <property type="entry name" value="MbhE"/>
    <property type="match status" value="1"/>
</dbReference>
<dbReference type="Pfam" id="PF00361">
    <property type="entry name" value="Proton_antipo_M"/>
    <property type="match status" value="1"/>
</dbReference>
<dbReference type="Pfam" id="PF00662">
    <property type="entry name" value="Proton_antipo_N"/>
    <property type="match status" value="1"/>
</dbReference>
<dbReference type="PRINTS" id="PR01434">
    <property type="entry name" value="NADHDHGNASE5"/>
</dbReference>
<evidence type="ECO:0000250" key="1"/>
<evidence type="ECO:0000255" key="2"/>
<evidence type="ECO:0000305" key="3"/>
<organism>
    <name type="scientific">Staphylococcus epidermidis (strain ATCC 12228 / FDA PCI 1200)</name>
    <dbReference type="NCBI Taxonomy" id="176280"/>
    <lineage>
        <taxon>Bacteria</taxon>
        <taxon>Bacillati</taxon>
        <taxon>Bacillota</taxon>
        <taxon>Bacilli</taxon>
        <taxon>Bacillales</taxon>
        <taxon>Staphylococcaceae</taxon>
        <taxon>Staphylococcus</taxon>
    </lineage>
</organism>
<keyword id="KW-0050">Antiport</keyword>
<keyword id="KW-1003">Cell membrane</keyword>
<keyword id="KW-0406">Ion transport</keyword>
<keyword id="KW-0472">Membrane</keyword>
<keyword id="KW-0812">Transmembrane</keyword>
<keyword id="KW-1133">Transmembrane helix</keyword>
<keyword id="KW-0813">Transport</keyword>